<accession>Q00099</accession>
<organismHost>
    <name type="scientific">Ictaluridae</name>
    <name type="common">bullhead catfishes</name>
    <dbReference type="NCBI Taxonomy" id="7996"/>
</organismHost>
<dbReference type="EMBL" id="M75136">
    <property type="protein sequence ID" value="AAA88159.1"/>
    <property type="molecule type" value="Genomic_DNA"/>
</dbReference>
<dbReference type="PIR" id="C36792">
    <property type="entry name" value="C36792"/>
</dbReference>
<dbReference type="RefSeq" id="NP_041147.1">
    <property type="nucleotide sequence ID" value="NC_001493.2"/>
</dbReference>
<dbReference type="GeneID" id="1488451"/>
<dbReference type="KEGG" id="vg:1488451"/>
<dbReference type="Proteomes" id="UP000007643">
    <property type="component" value="Segment"/>
</dbReference>
<feature type="chain" id="PRO_0000222136" description="Uncharacterized protein ORF56">
    <location>
        <begin position="1"/>
        <end position="1179"/>
    </location>
</feature>
<keyword id="KW-1185">Reference proteome</keyword>
<reference key="1">
    <citation type="journal article" date="1992" name="Virology">
        <title>Channel catfish virus: a new type of herpesvirus.</title>
        <authorList>
            <person name="Davison A.J."/>
        </authorList>
    </citation>
    <scope>NUCLEOTIDE SEQUENCE [LARGE SCALE GENOMIC DNA]</scope>
</reference>
<gene>
    <name type="primary">ORF56</name>
</gene>
<sequence length="1179" mass="132389">MSSEVFRWNFITEKLTHAKEYVPLFLFFSKKDFLDPKTGDFSFKSLKPFQQNLMKLMLWLTRAFKGSVYMCYMEQLFIGNQTTAVPPALRCTLSSDVVFIFTLDKADLWGNDGSRDGSLLDLLFKDDLDNNLRYKDRMVHAVKKLICHHLLLISKEVLYTSSNDLERERDLTDMVDWETSNYKMGAVDRKVVSAYGGMLFRLPAGNHEKFSLLTVFSAVARYFMGCEKEVDGSQVDPDFSIWISLSKFFEPSNSPVFRKFADSCGRAPVIDFLQRVHRGELSIPAHELLLFRYDPDELFNVHNFRAFENVSLYGYPHLDQSGKKCVSLDDHVRASVALGVITNCSPPSILDGVATTVIYPHLTPIIGISAAVDKSIGQRNKLFTLDLKIELFKNILLKNASKIPVEPISSIYGKLQKLLTRDRSPGLSLRHRFPMGFVCSMKSPDMAPRFMDTFMMKELFVNHMGCTRCGQAVTEFGYILYNTAPRWKQTRIMLVNYTRPGQGKTFTNSVIMGLLGPVSEIFDEISNFTATSFKYMPMTIGKVMFMDDVGFTSDQQKTIAREDNIIQNHFKCMLDKGYTNNNVTQWDATANKYGTNKIISIQNTGFVWNTNTLDPFGNALRDRSIILGPEPSTRKITAKGEGQVKAILNGKGLTELATTLFLRQQLIQTMIYTLTGEGGITSRHNEFLTDVLSVLGAHYPTFHTGSHSLARDHFKILDLAYADTIRVAITAVLDMWLPPWTVPPDFVDDETVEEYLMRLNRARLEALGEMELSSIIVEVLAQISVFLPSSIVQTATVAFNQETGAVLARVCEFLGLAMNNRQLEMVAGPHGTITINRPHMLDPHFEVDARGVFKMAKSVMILRGGERVKLIQGLKTRDGGGGEITMDGALILDLCKLVNPKIFTELWNDLIGAFEASGELTVWFLPQNVHTINILKLFHLLGTKGVYSEGDGPGFQVHRDFAGLSTELFRRGLDRDSAVNGVIPVDTSECVINLEPYAREVGGLDPSVITPDGVSMEFMTASFHATTIKKFGPGFINIPGIGTRFTHSRAAMYALGDEIKLCKARAGIPADHTEWEYKHAESVYREYMRTPITDVKGHLGRYLCATNSSDSLARDDSYLVALHESLGSVTYEDVYTRSTMEYAAQPEMPAPVEAPVQRKRRISADDLDLATKIQRLMNR</sequence>
<organism>
    <name type="scientific">Ictalurid herpesvirus 1 (strain Auburn)</name>
    <name type="common">IcHV-1</name>
    <name type="synonym">Channel catfish herpesvirus</name>
    <dbReference type="NCBI Taxonomy" id="766178"/>
    <lineage>
        <taxon>Viruses</taxon>
        <taxon>Duplodnaviria</taxon>
        <taxon>Heunggongvirae</taxon>
        <taxon>Peploviricota</taxon>
        <taxon>Herviviricetes</taxon>
        <taxon>Herpesvirales</taxon>
        <taxon>Alloherpesviridae</taxon>
        <taxon>Ictavirus</taxon>
        <taxon>Ictavirus ictaluridallo1</taxon>
        <taxon>Ictalurid herpesvirus 1</taxon>
    </lineage>
</organism>
<protein>
    <recommendedName>
        <fullName>Uncharacterized protein ORF56</fullName>
    </recommendedName>
</protein>
<proteinExistence type="predicted"/>
<name>VG56_ICHVA</name>